<dbReference type="EMBL" id="AB091689">
    <property type="protein sequence ID" value="BAC16316.1"/>
    <property type="molecule type" value="mRNA"/>
</dbReference>
<dbReference type="EMBL" id="AK050864">
    <property type="protein sequence ID" value="BAC34438.1"/>
    <property type="molecule type" value="mRNA"/>
</dbReference>
<dbReference type="EMBL" id="AK146924">
    <property type="protein sequence ID" value="BAE27535.1"/>
    <property type="molecule type" value="mRNA"/>
</dbReference>
<dbReference type="EMBL" id="BC035295">
    <property type="protein sequence ID" value="AAH35295.1"/>
    <property type="molecule type" value="mRNA"/>
</dbReference>
<dbReference type="CCDS" id="CCDS27839.1"/>
<dbReference type="RefSeq" id="NP_700456.1">
    <property type="nucleotide sequence ID" value="NM_153407.2"/>
</dbReference>
<dbReference type="FunCoup" id="Q8BGQ2">
    <property type="interactions" value="2635"/>
</dbReference>
<dbReference type="STRING" id="10090.ENSMUSP00000052144"/>
<dbReference type="iPTMnet" id="Q8BGQ2"/>
<dbReference type="PhosphoSitePlus" id="Q8BGQ2"/>
<dbReference type="PaxDb" id="10090-ENSMUSP00000052144"/>
<dbReference type="ProteomicsDB" id="283961"/>
<dbReference type="Antibodypedia" id="14333">
    <property type="antibodies" value="264 antibodies from 28 providers"/>
</dbReference>
<dbReference type="DNASU" id="207785"/>
<dbReference type="Ensembl" id="ENSMUST00000061457.7">
    <property type="protein sequence ID" value="ENSMUSP00000052144.6"/>
    <property type="gene ID" value="ENSMUSG00000044636.7"/>
</dbReference>
<dbReference type="GeneID" id="207785"/>
<dbReference type="KEGG" id="mmu:207785"/>
<dbReference type="UCSC" id="uc007xrk.1">
    <property type="organism name" value="mouse"/>
</dbReference>
<dbReference type="AGR" id="MGI:2386852"/>
<dbReference type="CTD" id="81566"/>
<dbReference type="MGI" id="MGI:2386852">
    <property type="gene designation" value="Csrnp2"/>
</dbReference>
<dbReference type="VEuPathDB" id="HostDB:ENSMUSG00000044636"/>
<dbReference type="eggNOG" id="KOG3813">
    <property type="taxonomic scope" value="Eukaryota"/>
</dbReference>
<dbReference type="GeneTree" id="ENSGT00950000183072"/>
<dbReference type="HOGENOM" id="CLU_034103_0_1_1"/>
<dbReference type="InParanoid" id="Q8BGQ2"/>
<dbReference type="OMA" id="PFRTDHE"/>
<dbReference type="OrthoDB" id="5946974at2759"/>
<dbReference type="PhylomeDB" id="Q8BGQ2"/>
<dbReference type="TreeFam" id="TF323969"/>
<dbReference type="BioGRID-ORCS" id="207785">
    <property type="hits" value="2 hits in 78 CRISPR screens"/>
</dbReference>
<dbReference type="ChiTaRS" id="Csrnp2">
    <property type="organism name" value="mouse"/>
</dbReference>
<dbReference type="PRO" id="PR:Q8BGQ2"/>
<dbReference type="Proteomes" id="UP000000589">
    <property type="component" value="Chromosome 15"/>
</dbReference>
<dbReference type="RNAct" id="Q8BGQ2">
    <property type="molecule type" value="protein"/>
</dbReference>
<dbReference type="Bgee" id="ENSMUSG00000044636">
    <property type="expression patterns" value="Expressed in animal zygote and 221 other cell types or tissues"/>
</dbReference>
<dbReference type="GO" id="GO:0005634">
    <property type="term" value="C:nucleus"/>
    <property type="evidence" value="ECO:0000314"/>
    <property type="project" value="UniProtKB"/>
</dbReference>
<dbReference type="GO" id="GO:0001228">
    <property type="term" value="F:DNA-binding transcription activator activity, RNA polymerase II-specific"/>
    <property type="evidence" value="ECO:0000314"/>
    <property type="project" value="NTNU_SB"/>
</dbReference>
<dbReference type="GO" id="GO:0003700">
    <property type="term" value="F:DNA-binding transcription factor activity"/>
    <property type="evidence" value="ECO:0000314"/>
    <property type="project" value="UniProtKB"/>
</dbReference>
<dbReference type="GO" id="GO:0019902">
    <property type="term" value="F:phosphatase binding"/>
    <property type="evidence" value="ECO:0000250"/>
    <property type="project" value="UniProtKB"/>
</dbReference>
<dbReference type="GO" id="GO:0043565">
    <property type="term" value="F:sequence-specific DNA binding"/>
    <property type="evidence" value="ECO:0000314"/>
    <property type="project" value="NTNU_SB"/>
</dbReference>
<dbReference type="GO" id="GO:0006915">
    <property type="term" value="P:apoptotic process"/>
    <property type="evidence" value="ECO:0007669"/>
    <property type="project" value="UniProtKB-KW"/>
</dbReference>
<dbReference type="GO" id="GO:0045944">
    <property type="term" value="P:positive regulation of transcription by RNA polymerase II"/>
    <property type="evidence" value="ECO:0000314"/>
    <property type="project" value="UniProtKB"/>
</dbReference>
<dbReference type="InterPro" id="IPR031972">
    <property type="entry name" value="CSRNP_N"/>
</dbReference>
<dbReference type="InterPro" id="IPR023260">
    <property type="entry name" value="Cys/Ser-rich_nuc_prot"/>
</dbReference>
<dbReference type="PANTHER" id="PTHR13580:SF6">
    <property type="entry name" value="CYSTEINE_SERINE-RICH NUCLEAR PROTEIN 2"/>
    <property type="match status" value="1"/>
</dbReference>
<dbReference type="PANTHER" id="PTHR13580">
    <property type="entry name" value="TGF-BETA INDUCED APOPTOSIS PROTEIN"/>
    <property type="match status" value="1"/>
</dbReference>
<dbReference type="Pfam" id="PF16019">
    <property type="entry name" value="CSRNP_N"/>
    <property type="match status" value="1"/>
</dbReference>
<dbReference type="PRINTS" id="PR02031">
    <property type="entry name" value="CYSSERRICHNP"/>
</dbReference>
<protein>
    <recommendedName>
        <fullName>Cysteine/serine-rich nuclear protein 2</fullName>
        <shortName>CSRNP-2</shortName>
    </recommendedName>
    <alternativeName>
        <fullName>Protein FAM130A1</fullName>
    </alternativeName>
    <alternativeName>
        <fullName>TGF-beta-induced apoptosis protein 12</fullName>
        <shortName>TAIP-12</shortName>
    </alternativeName>
</protein>
<organism>
    <name type="scientific">Mus musculus</name>
    <name type="common">Mouse</name>
    <dbReference type="NCBI Taxonomy" id="10090"/>
    <lineage>
        <taxon>Eukaryota</taxon>
        <taxon>Metazoa</taxon>
        <taxon>Chordata</taxon>
        <taxon>Craniata</taxon>
        <taxon>Vertebrata</taxon>
        <taxon>Euteleostomi</taxon>
        <taxon>Mammalia</taxon>
        <taxon>Eutheria</taxon>
        <taxon>Euarchontoglires</taxon>
        <taxon>Glires</taxon>
        <taxon>Rodentia</taxon>
        <taxon>Myomorpha</taxon>
        <taxon>Muroidea</taxon>
        <taxon>Muridae</taxon>
        <taxon>Murinae</taxon>
        <taxon>Mus</taxon>
        <taxon>Mus</taxon>
    </lineage>
</organism>
<evidence type="ECO:0000250" key="1">
    <source>
        <dbReference type="UniProtKB" id="Q9H175"/>
    </source>
</evidence>
<evidence type="ECO:0000256" key="2">
    <source>
        <dbReference type="SAM" id="MobiDB-lite"/>
    </source>
</evidence>
<evidence type="ECO:0000269" key="3">
    <source>
    </source>
</evidence>
<evidence type="ECO:0000305" key="4"/>
<accession>Q8BGQ2</accession>
<accession>Q3UIH1</accession>
<feature type="chain" id="PRO_0000114791" description="Cysteine/serine-rich nuclear protein 2">
    <location>
        <begin position="1"/>
        <end position="534"/>
    </location>
</feature>
<feature type="region of interest" description="Disordered" evidence="2">
    <location>
        <begin position="1"/>
        <end position="52"/>
    </location>
</feature>
<feature type="region of interest" description="Disordered" evidence="2">
    <location>
        <begin position="480"/>
        <end position="534"/>
    </location>
</feature>
<feature type="compositionally biased region" description="Low complexity" evidence="2">
    <location>
        <begin position="31"/>
        <end position="40"/>
    </location>
</feature>
<feature type="compositionally biased region" description="Polar residues" evidence="2">
    <location>
        <begin position="42"/>
        <end position="52"/>
    </location>
</feature>
<feature type="compositionally biased region" description="Basic and acidic residues" evidence="2">
    <location>
        <begin position="480"/>
        <end position="492"/>
    </location>
</feature>
<feature type="modified residue" description="N-acetylmethionine" evidence="1">
    <location>
        <position position="1"/>
    </location>
</feature>
<keyword id="KW-0007">Acetylation</keyword>
<keyword id="KW-0010">Activator</keyword>
<keyword id="KW-0053">Apoptosis</keyword>
<keyword id="KW-0238">DNA-binding</keyword>
<keyword id="KW-0539">Nucleus</keyword>
<keyword id="KW-1185">Reference proteome</keyword>
<keyword id="KW-0804">Transcription</keyword>
<keyword id="KW-0805">Transcription regulation</keyword>
<gene>
    <name type="primary">Csrnp2</name>
    <name type="synonym">Fam130a1</name>
    <name type="synonym">Taip12</name>
</gene>
<comment type="function">
    <text evidence="3">Binds to the consensus sequence 5'-AGAGTG-3' and has transcriptional activator activity. May play a role in apoptosis.</text>
</comment>
<comment type="subcellular location">
    <subcellularLocation>
        <location evidence="3">Nucleus</location>
    </subcellularLocation>
</comment>
<comment type="tissue specificity">
    <text evidence="3">Highest expression detected in thymus, brain and ovary. Low levels detected in naive T-cells.</text>
</comment>
<comment type="disruption phenotype">
    <text evidence="3">Mice display no obvious defects in development, hematopoiesis or T-cell function. Deletion of Axud1, Csrnp2 and Csrnp3 together causes partial neonatal lethality, suggesting that they have redundant functions.</text>
</comment>
<comment type="similarity">
    <text evidence="4">Belongs to the AXUD1 family.</text>
</comment>
<reference key="1">
    <citation type="submission" date="2002-09" db="EMBL/GenBank/DDBJ databases">
        <title>TGF-beta induced apoptosis protein 12 (TAIP-12).</title>
        <authorList>
            <person name="Akiyama N."/>
            <person name="Saitoh S."/>
            <person name="Yamada H."/>
            <person name="Kondoh S.K."/>
        </authorList>
    </citation>
    <scope>NUCLEOTIDE SEQUENCE [MRNA]</scope>
    <source>
        <strain>BALB/cJ</strain>
        <tissue>Brain</tissue>
    </source>
</reference>
<reference key="2">
    <citation type="journal article" date="2005" name="Science">
        <title>The transcriptional landscape of the mammalian genome.</title>
        <authorList>
            <person name="Carninci P."/>
            <person name="Kasukawa T."/>
            <person name="Katayama S."/>
            <person name="Gough J."/>
            <person name="Frith M.C."/>
            <person name="Maeda N."/>
            <person name="Oyama R."/>
            <person name="Ravasi T."/>
            <person name="Lenhard B."/>
            <person name="Wells C."/>
            <person name="Kodzius R."/>
            <person name="Shimokawa K."/>
            <person name="Bajic V.B."/>
            <person name="Brenner S.E."/>
            <person name="Batalov S."/>
            <person name="Forrest A.R."/>
            <person name="Zavolan M."/>
            <person name="Davis M.J."/>
            <person name="Wilming L.G."/>
            <person name="Aidinis V."/>
            <person name="Allen J.E."/>
            <person name="Ambesi-Impiombato A."/>
            <person name="Apweiler R."/>
            <person name="Aturaliya R.N."/>
            <person name="Bailey T.L."/>
            <person name="Bansal M."/>
            <person name="Baxter L."/>
            <person name="Beisel K.W."/>
            <person name="Bersano T."/>
            <person name="Bono H."/>
            <person name="Chalk A.M."/>
            <person name="Chiu K.P."/>
            <person name="Choudhary V."/>
            <person name="Christoffels A."/>
            <person name="Clutterbuck D.R."/>
            <person name="Crowe M.L."/>
            <person name="Dalla E."/>
            <person name="Dalrymple B.P."/>
            <person name="de Bono B."/>
            <person name="Della Gatta G."/>
            <person name="di Bernardo D."/>
            <person name="Down T."/>
            <person name="Engstrom P."/>
            <person name="Fagiolini M."/>
            <person name="Faulkner G."/>
            <person name="Fletcher C.F."/>
            <person name="Fukushima T."/>
            <person name="Furuno M."/>
            <person name="Futaki S."/>
            <person name="Gariboldi M."/>
            <person name="Georgii-Hemming P."/>
            <person name="Gingeras T.R."/>
            <person name="Gojobori T."/>
            <person name="Green R.E."/>
            <person name="Gustincich S."/>
            <person name="Harbers M."/>
            <person name="Hayashi Y."/>
            <person name="Hensch T.K."/>
            <person name="Hirokawa N."/>
            <person name="Hill D."/>
            <person name="Huminiecki L."/>
            <person name="Iacono M."/>
            <person name="Ikeo K."/>
            <person name="Iwama A."/>
            <person name="Ishikawa T."/>
            <person name="Jakt M."/>
            <person name="Kanapin A."/>
            <person name="Katoh M."/>
            <person name="Kawasawa Y."/>
            <person name="Kelso J."/>
            <person name="Kitamura H."/>
            <person name="Kitano H."/>
            <person name="Kollias G."/>
            <person name="Krishnan S.P."/>
            <person name="Kruger A."/>
            <person name="Kummerfeld S.K."/>
            <person name="Kurochkin I.V."/>
            <person name="Lareau L.F."/>
            <person name="Lazarevic D."/>
            <person name="Lipovich L."/>
            <person name="Liu J."/>
            <person name="Liuni S."/>
            <person name="McWilliam S."/>
            <person name="Madan Babu M."/>
            <person name="Madera M."/>
            <person name="Marchionni L."/>
            <person name="Matsuda H."/>
            <person name="Matsuzawa S."/>
            <person name="Miki H."/>
            <person name="Mignone F."/>
            <person name="Miyake S."/>
            <person name="Morris K."/>
            <person name="Mottagui-Tabar S."/>
            <person name="Mulder N."/>
            <person name="Nakano N."/>
            <person name="Nakauchi H."/>
            <person name="Ng P."/>
            <person name="Nilsson R."/>
            <person name="Nishiguchi S."/>
            <person name="Nishikawa S."/>
            <person name="Nori F."/>
            <person name="Ohara O."/>
            <person name="Okazaki Y."/>
            <person name="Orlando V."/>
            <person name="Pang K.C."/>
            <person name="Pavan W.J."/>
            <person name="Pavesi G."/>
            <person name="Pesole G."/>
            <person name="Petrovsky N."/>
            <person name="Piazza S."/>
            <person name="Reed J."/>
            <person name="Reid J.F."/>
            <person name="Ring B.Z."/>
            <person name="Ringwald M."/>
            <person name="Rost B."/>
            <person name="Ruan Y."/>
            <person name="Salzberg S.L."/>
            <person name="Sandelin A."/>
            <person name="Schneider C."/>
            <person name="Schoenbach C."/>
            <person name="Sekiguchi K."/>
            <person name="Semple C.A."/>
            <person name="Seno S."/>
            <person name="Sessa L."/>
            <person name="Sheng Y."/>
            <person name="Shibata Y."/>
            <person name="Shimada H."/>
            <person name="Shimada K."/>
            <person name="Silva D."/>
            <person name="Sinclair B."/>
            <person name="Sperling S."/>
            <person name="Stupka E."/>
            <person name="Sugiura K."/>
            <person name="Sultana R."/>
            <person name="Takenaka Y."/>
            <person name="Taki K."/>
            <person name="Tammoja K."/>
            <person name="Tan S.L."/>
            <person name="Tang S."/>
            <person name="Taylor M.S."/>
            <person name="Tegner J."/>
            <person name="Teichmann S.A."/>
            <person name="Ueda H.R."/>
            <person name="van Nimwegen E."/>
            <person name="Verardo R."/>
            <person name="Wei C.L."/>
            <person name="Yagi K."/>
            <person name="Yamanishi H."/>
            <person name="Zabarovsky E."/>
            <person name="Zhu S."/>
            <person name="Zimmer A."/>
            <person name="Hide W."/>
            <person name="Bult C."/>
            <person name="Grimmond S.M."/>
            <person name="Teasdale R.D."/>
            <person name="Liu E.T."/>
            <person name="Brusic V."/>
            <person name="Quackenbush J."/>
            <person name="Wahlestedt C."/>
            <person name="Mattick J.S."/>
            <person name="Hume D.A."/>
            <person name="Kai C."/>
            <person name="Sasaki D."/>
            <person name="Tomaru Y."/>
            <person name="Fukuda S."/>
            <person name="Kanamori-Katayama M."/>
            <person name="Suzuki M."/>
            <person name="Aoki J."/>
            <person name="Arakawa T."/>
            <person name="Iida J."/>
            <person name="Imamura K."/>
            <person name="Itoh M."/>
            <person name="Kato T."/>
            <person name="Kawaji H."/>
            <person name="Kawagashira N."/>
            <person name="Kawashima T."/>
            <person name="Kojima M."/>
            <person name="Kondo S."/>
            <person name="Konno H."/>
            <person name="Nakano K."/>
            <person name="Ninomiya N."/>
            <person name="Nishio T."/>
            <person name="Okada M."/>
            <person name="Plessy C."/>
            <person name="Shibata K."/>
            <person name="Shiraki T."/>
            <person name="Suzuki S."/>
            <person name="Tagami M."/>
            <person name="Waki K."/>
            <person name="Watahiki A."/>
            <person name="Okamura-Oho Y."/>
            <person name="Suzuki H."/>
            <person name="Kawai J."/>
            <person name="Hayashizaki Y."/>
        </authorList>
    </citation>
    <scope>NUCLEOTIDE SEQUENCE [LARGE SCALE MRNA]</scope>
    <source>
        <strain>C57BL/6J</strain>
        <tissue>Embryo</tissue>
        <tissue>Kidney</tissue>
    </source>
</reference>
<reference key="3">
    <citation type="journal article" date="2004" name="Genome Res.">
        <title>The status, quality, and expansion of the NIH full-length cDNA project: the Mammalian Gene Collection (MGC).</title>
        <authorList>
            <consortium name="The MGC Project Team"/>
        </authorList>
    </citation>
    <scope>NUCLEOTIDE SEQUENCE [LARGE SCALE MRNA]</scope>
    <source>
        <strain>FVB/N</strain>
        <tissue>Mammary tumor</tissue>
    </source>
</reference>
<reference key="4">
    <citation type="journal article" date="2007" name="PLoS ONE">
        <title>Characterization of a family of novel cysteine- serine-rich nuclear proteins (CSRNP).</title>
        <authorList>
            <person name="Gingras S."/>
            <person name="Pelletier S."/>
            <person name="Boyd K."/>
            <person name="Ihle J.N."/>
        </authorList>
    </citation>
    <scope>FUNCTION</scope>
    <scope>SUBCELLULAR LOCATION</scope>
    <scope>TISSUE SPECIFICITY</scope>
    <scope>DISRUPTION PHENOTYPE</scope>
</reference>
<name>CSRN2_MOUSE</name>
<sequence length="534" mass="58504">MDAFSGSGLKRKFDDVDVGSSVSNSDDEMSSSDSADSCDSLNPPTTASFTPTSILKRQKQLRRKNVRFDQVTVYYFARRQGFTSVPSQGGSSLGMAQRHNSVRSYTLCEFAQEQEVNHREILREHLKEEKLHAKKMKLTKNGTVESVEADGLTLDDVSDEDIDVENVEVDDYFFLQPLPTKRRRALLRASGVHRIDAEEKQELRAIRLSREECGCDCRLYCDPEACACSQAGIKCQVDRMSFPCGCSRDGCGNMAGRIEFNPIRVRTHYLHTIMKLELESKRQVSRPAAEEEPLPGAQSSQTQDFQEFIAENETAVMHLQSAEELERLKAEEDSSGSSASLDSSMESLGVCILEEPLAVPQELCPGLAAPILIQAQLPPGSSVLCFTENSEHPAASPMSSPSYLNSGPLVYYQVEQRPVVGVKAESGSEEGPASFPKEKDLSVFSLPVTSLVACGPSASAALCKPEVGKTSSLNKLLPEDCGLKEPESEDLHPSWSPSSLPFRTDNEEGCGVQNSQQSEDRTSEDSALELPLAV</sequence>
<proteinExistence type="evidence at transcript level"/>